<comment type="function">
    <text evidence="1">Catalytic subunit of a heterodimeric structure-specific endonuclease that resolves DNA secondary structures generated during DNA repair and recombination. Has endonuclease activity towards branched DNA substrates, introducing single-strand cuts in duplex DNA close to junctions with ss-DNA.</text>
</comment>
<comment type="cofactor">
    <cofactor evidence="1">
        <name>a divalent metal cation</name>
        <dbReference type="ChEBI" id="CHEBI:60240"/>
    </cofactor>
</comment>
<comment type="subunit">
    <text evidence="1">Forms a heterodimer with mus312/SLX4.</text>
</comment>
<comment type="subcellular location">
    <subcellularLocation>
        <location evidence="1">Nucleus</location>
    </subcellularLocation>
</comment>
<comment type="similarity">
    <text evidence="1">Belongs to the SLX1 family.</text>
</comment>
<dbReference type="EC" id="3.1.-.-" evidence="1"/>
<dbReference type="EMBL" id="CH479182">
    <property type="protein sequence ID" value="EDW34126.1"/>
    <property type="molecule type" value="Genomic_DNA"/>
</dbReference>
<dbReference type="SMR" id="B4GEU1"/>
<dbReference type="STRING" id="7234.B4GEU1"/>
<dbReference type="EnsemblMetazoa" id="FBtr0187688">
    <property type="protein sequence ID" value="FBpp0186180"/>
    <property type="gene ID" value="FBgn0159665"/>
</dbReference>
<dbReference type="EnsemblMetazoa" id="XM_002016990.2">
    <property type="protein sequence ID" value="XP_002017026.1"/>
    <property type="gene ID" value="LOC6591982"/>
</dbReference>
<dbReference type="GeneID" id="6591982"/>
<dbReference type="KEGG" id="dpe:6591982"/>
<dbReference type="eggNOG" id="KOG3005">
    <property type="taxonomic scope" value="Eukaryota"/>
</dbReference>
<dbReference type="HOGENOM" id="CLU_030739_0_0_1"/>
<dbReference type="OMA" id="HNRGCDF"/>
<dbReference type="OrthoDB" id="24645at2759"/>
<dbReference type="PhylomeDB" id="B4GEU1"/>
<dbReference type="Proteomes" id="UP000008744">
    <property type="component" value="Unassembled WGS sequence"/>
</dbReference>
<dbReference type="GO" id="GO:0033557">
    <property type="term" value="C:Slx1-Slx4 complex"/>
    <property type="evidence" value="ECO:0007669"/>
    <property type="project" value="UniProtKB-UniRule"/>
</dbReference>
<dbReference type="GO" id="GO:0017108">
    <property type="term" value="F:5'-flap endonuclease activity"/>
    <property type="evidence" value="ECO:0007669"/>
    <property type="project" value="InterPro"/>
</dbReference>
<dbReference type="GO" id="GO:0008821">
    <property type="term" value="F:crossover junction DNA endonuclease activity"/>
    <property type="evidence" value="ECO:0007669"/>
    <property type="project" value="TreeGrafter"/>
</dbReference>
<dbReference type="GO" id="GO:0008270">
    <property type="term" value="F:zinc ion binding"/>
    <property type="evidence" value="ECO:0007669"/>
    <property type="project" value="UniProtKB-KW"/>
</dbReference>
<dbReference type="GO" id="GO:0000724">
    <property type="term" value="P:double-strand break repair via homologous recombination"/>
    <property type="evidence" value="ECO:0007669"/>
    <property type="project" value="TreeGrafter"/>
</dbReference>
<dbReference type="CDD" id="cd10455">
    <property type="entry name" value="GIY-YIG_SLX1"/>
    <property type="match status" value="1"/>
</dbReference>
<dbReference type="FunFam" id="3.40.1440.10:FF:000012">
    <property type="entry name" value="Structure-specific endonuclease subunit SLX1 homolog"/>
    <property type="match status" value="1"/>
</dbReference>
<dbReference type="Gene3D" id="3.40.1440.10">
    <property type="entry name" value="GIY-YIG endonuclease"/>
    <property type="match status" value="1"/>
</dbReference>
<dbReference type="Gene3D" id="3.30.40.10">
    <property type="entry name" value="Zinc/RING finger domain, C3HC4 (zinc finger)"/>
    <property type="match status" value="1"/>
</dbReference>
<dbReference type="HAMAP" id="MF_03100">
    <property type="entry name" value="Endonuc_su_Slx1"/>
    <property type="match status" value="1"/>
</dbReference>
<dbReference type="InterPro" id="IPR000305">
    <property type="entry name" value="GIY-YIG_endonuc"/>
</dbReference>
<dbReference type="InterPro" id="IPR035901">
    <property type="entry name" value="GIY-YIG_endonuc_sf"/>
</dbReference>
<dbReference type="InterPro" id="IPR027520">
    <property type="entry name" value="Slx1"/>
</dbReference>
<dbReference type="InterPro" id="IPR048749">
    <property type="entry name" value="SLX1_C"/>
</dbReference>
<dbReference type="InterPro" id="IPR050381">
    <property type="entry name" value="SLX1_endonuclease"/>
</dbReference>
<dbReference type="InterPro" id="IPR013083">
    <property type="entry name" value="Znf_RING/FYVE/PHD"/>
</dbReference>
<dbReference type="PANTHER" id="PTHR20208">
    <property type="entry name" value="STRUCTURE-SPECIFIC ENDONUCLEASE SUBUNIT SLX1"/>
    <property type="match status" value="1"/>
</dbReference>
<dbReference type="PANTHER" id="PTHR20208:SF10">
    <property type="entry name" value="STRUCTURE-SPECIFIC ENDONUCLEASE SUBUNIT SLX1"/>
    <property type="match status" value="1"/>
</dbReference>
<dbReference type="Pfam" id="PF01541">
    <property type="entry name" value="GIY-YIG"/>
    <property type="match status" value="1"/>
</dbReference>
<dbReference type="Pfam" id="PF21202">
    <property type="entry name" value="SLX1_C"/>
    <property type="match status" value="1"/>
</dbReference>
<dbReference type="SUPFAM" id="SSF82771">
    <property type="entry name" value="GIY-YIG endonuclease"/>
    <property type="match status" value="1"/>
</dbReference>
<dbReference type="PROSITE" id="PS50164">
    <property type="entry name" value="GIY_YIG"/>
    <property type="match status" value="1"/>
</dbReference>
<keyword id="KW-0227">DNA damage</keyword>
<keyword id="KW-0233">DNA recombination</keyword>
<keyword id="KW-0234">DNA repair</keyword>
<keyword id="KW-0255">Endonuclease</keyword>
<keyword id="KW-0378">Hydrolase</keyword>
<keyword id="KW-0479">Metal-binding</keyword>
<keyword id="KW-0540">Nuclease</keyword>
<keyword id="KW-0539">Nucleus</keyword>
<keyword id="KW-1185">Reference proteome</keyword>
<keyword id="KW-0862">Zinc</keyword>
<keyword id="KW-0863">Zinc-finger</keyword>
<proteinExistence type="inferred from homology"/>
<accession>B4GEU1</accession>
<protein>
    <recommendedName>
        <fullName evidence="1">Structure-specific endonuclease subunit SLX1 homolog</fullName>
        <ecNumber evidence="1">3.1.-.-</ecNumber>
    </recommendedName>
</protein>
<evidence type="ECO:0000255" key="1">
    <source>
        <dbReference type="HAMAP-Rule" id="MF_03100"/>
    </source>
</evidence>
<evidence type="ECO:0000256" key="2">
    <source>
        <dbReference type="SAM" id="MobiDB-lite"/>
    </source>
</evidence>
<reference key="1">
    <citation type="journal article" date="2007" name="Nature">
        <title>Evolution of genes and genomes on the Drosophila phylogeny.</title>
        <authorList>
            <consortium name="Drosophila 12 genomes consortium"/>
        </authorList>
    </citation>
    <scope>NUCLEOTIDE SEQUENCE [LARGE SCALE GENOMIC DNA]</scope>
    <source>
        <strain>MSH-3 / Tucson 14011-0111.49</strain>
    </source>
</reference>
<feature type="chain" id="PRO_0000383758" description="Structure-specific endonuclease subunit SLX1 homolog">
    <location>
        <begin position="1"/>
        <end position="291"/>
    </location>
</feature>
<feature type="domain" description="GIY-YIG" evidence="1">
    <location>
        <begin position="15"/>
        <end position="101"/>
    </location>
</feature>
<feature type="zinc finger region" description="SLX1-type" evidence="1">
    <location>
        <begin position="189"/>
        <end position="242"/>
    </location>
</feature>
<feature type="region of interest" description="Disordered" evidence="2">
    <location>
        <begin position="261"/>
        <end position="291"/>
    </location>
</feature>
<feature type="compositionally biased region" description="Acidic residues" evidence="2">
    <location>
        <begin position="264"/>
        <end position="291"/>
    </location>
</feature>
<organism>
    <name type="scientific">Drosophila persimilis</name>
    <name type="common">Fruit fly</name>
    <dbReference type="NCBI Taxonomy" id="7234"/>
    <lineage>
        <taxon>Eukaryota</taxon>
        <taxon>Metazoa</taxon>
        <taxon>Ecdysozoa</taxon>
        <taxon>Arthropoda</taxon>
        <taxon>Hexapoda</taxon>
        <taxon>Insecta</taxon>
        <taxon>Pterygota</taxon>
        <taxon>Neoptera</taxon>
        <taxon>Endopterygota</taxon>
        <taxon>Diptera</taxon>
        <taxon>Brachycera</taxon>
        <taxon>Muscomorpha</taxon>
        <taxon>Ephydroidea</taxon>
        <taxon>Drosophilidae</taxon>
        <taxon>Drosophila</taxon>
        <taxon>Sophophora</taxon>
    </lineage>
</organism>
<gene>
    <name type="primary">slx1</name>
    <name type="ORF">GL22073</name>
</gene>
<sequence>MPPPPEDEAIAHKGHFYGVYLLCSQSLDSRYRAKCYVGFTVNPKRRIKQHNRGCDFGGAKKTSKKGPWQMVMIVHGFPNNISALQFEWAWQQPTLSTRLKIFPDLKRKKPKETHFDYNFRILNRMLGVGPWHRLALTIRWLETDYERAFDLPIPCHMEIVSGKVSISASQRKLEEATGTAPPVAWAHECHLCMQSIEQPERSRLGCTNPTCRLTCHMLCLASYLLGDEPGQYIPIGGECPLCETRLSWSALLQRKRLQLGVPEEMQDNEEEDLSDDGPDVDSDVEVQEFSD</sequence>
<name>SLX1_DROPE</name>